<name>IBP2_SHEEP</name>
<evidence type="ECO:0000250" key="1"/>
<evidence type="ECO:0000250" key="2">
    <source>
        <dbReference type="UniProtKB" id="P18065"/>
    </source>
</evidence>
<evidence type="ECO:0000255" key="3"/>
<evidence type="ECO:0000255" key="4">
    <source>
        <dbReference type="PROSITE-ProRule" id="PRU00500"/>
    </source>
</evidence>
<evidence type="ECO:0000255" key="5">
    <source>
        <dbReference type="PROSITE-ProRule" id="PRU00653"/>
    </source>
</evidence>
<evidence type="ECO:0000256" key="6">
    <source>
        <dbReference type="SAM" id="MobiDB-lite"/>
    </source>
</evidence>
<evidence type="ECO:0000269" key="7">
    <source>
    </source>
</evidence>
<protein>
    <recommendedName>
        <fullName>Insulin-like growth factor-binding protein 2</fullName>
        <shortName>IBP-2</shortName>
        <shortName>IGF-binding protein 2</shortName>
        <shortName>IGFBP-2</shortName>
    </recommendedName>
</protein>
<sequence>MQPRLGGPALLLLPPLLLLLLLGAGGGDCGARAEVLFRCPPCTPESLAACKPPPGAAAGPAGDARVPCELVREPGCGCCSVCARLEGERCGVYTPRCGQGLRCYPNPGSELPLRALVHGEGTCEKHGDAEYSASPEQVADNGEEHSEGGQVENHVDGNVNLMGGGGGAGRKPLKFRMKELAVFREKVTEQHRQMGKGGKHHLGLEEPKKLRPPPARTPCQQELDQVLERISTMRLPDERGPLEHLYSLHIPNCDKHGLYNLKQCKMSLNGQRGECWCVNPNTGKLIQGAPTIRGDPECHLFYNEQQGARGVHTQRMQ</sequence>
<organism>
    <name type="scientific">Ovis aries</name>
    <name type="common">Sheep</name>
    <dbReference type="NCBI Taxonomy" id="9940"/>
    <lineage>
        <taxon>Eukaryota</taxon>
        <taxon>Metazoa</taxon>
        <taxon>Chordata</taxon>
        <taxon>Craniata</taxon>
        <taxon>Vertebrata</taxon>
        <taxon>Euteleostomi</taxon>
        <taxon>Mammalia</taxon>
        <taxon>Eutheria</taxon>
        <taxon>Laurasiatheria</taxon>
        <taxon>Artiodactyla</taxon>
        <taxon>Ruminantia</taxon>
        <taxon>Pecora</taxon>
        <taxon>Bovidae</taxon>
        <taxon>Caprinae</taxon>
        <taxon>Ovis</taxon>
    </lineage>
</organism>
<keyword id="KW-1015">Disulfide bond</keyword>
<keyword id="KW-0325">Glycoprotein</keyword>
<keyword id="KW-0340">Growth factor binding</keyword>
<keyword id="KW-0341">Growth regulation</keyword>
<keyword id="KW-1185">Reference proteome</keyword>
<keyword id="KW-0964">Secreted</keyword>
<keyword id="KW-0732">Signal</keyword>
<comment type="function">
    <text evidence="2">Multifunctional protein that plays a critical role in regulating the availability of IGFs such as IGF1 and IGF2 to their receptors and thereby regulates IGF-mediated cellular processes including proliferation, differentiation, and apoptosis in a cell-type specific manner. Functions coordinately with receptor protein tyrosine phosphatase beta/PTPRB and the IGF1 receptor to regulate IGF1-mediated signaling by stimulating the phosphorylation of PTEN leading to its inactivation and AKT1 activation. Plays a positive role in cell migration via interaction with integrin alpha5/ITGA5 through an RGD motif. Additionally, interaction with ITGA5/ITGB1 enhances the adhesion of endothelial progenitor cells to endothelial cells. Upon mitochondrial damage, facilitates apoptosis with ITGA5 of podocytes, and then activates the phosphorylation of focal adhesion kinase (FAK)-mediated mitochondrial injury.</text>
</comment>
<comment type="subunit">
    <text evidence="2">Interacts with IGF1. Interacts with IGF2. Interacts (via RGD motif) with integrin alpha5/ITGA5; this interaction induces cell migration, adhesion or apoptosis according to the context. Interacts with PTPRB; this interaction leads to PTPRB dimerization and inactivation.</text>
</comment>
<comment type="subcellular location">
    <subcellularLocation>
        <location evidence="2">Secreted</location>
    </subcellularLocation>
</comment>
<comment type="tissue specificity">
    <text evidence="7">Expressed in abundance in selected adult tissues, namely liver, kidney, adrenal, pituitary and choroid plexus.</text>
</comment>
<comment type="domain">
    <text evidence="1">The C-terminus is required for IGF-binding and growth inhibition.</text>
</comment>
<comment type="PTM">
    <text evidence="2">Cleaved by MMP9 leading to release of free IGF2 from IGFBP2-IGF2 complex, which contributes to enhance the motility and the growth of astrocytes.</text>
</comment>
<comment type="PTM">
    <text evidence="2">O-glycosylated.</text>
</comment>
<proteinExistence type="evidence at transcript level"/>
<dbReference type="EMBL" id="S44612">
    <property type="protein sequence ID" value="AAB23135.1"/>
    <property type="molecule type" value="mRNA"/>
</dbReference>
<dbReference type="PIR" id="I46916">
    <property type="entry name" value="I46916"/>
</dbReference>
<dbReference type="RefSeq" id="NP_001009436.1">
    <property type="nucleotide sequence ID" value="NM_001009436.1"/>
</dbReference>
<dbReference type="BMRB" id="Q29400"/>
<dbReference type="SMR" id="Q29400"/>
<dbReference type="STRING" id="9940.ENSOARP00000020858"/>
<dbReference type="MEROPS" id="I31.953"/>
<dbReference type="PaxDb" id="9940-ENSOARP00000020858"/>
<dbReference type="GeneID" id="443469"/>
<dbReference type="KEGG" id="oas:443469"/>
<dbReference type="CTD" id="3485"/>
<dbReference type="eggNOG" id="ENOG502QRWQ">
    <property type="taxonomic scope" value="Eukaryota"/>
</dbReference>
<dbReference type="OrthoDB" id="9984807at2759"/>
<dbReference type="Proteomes" id="UP000002356">
    <property type="component" value="Unplaced"/>
</dbReference>
<dbReference type="GO" id="GO:0005576">
    <property type="term" value="C:extracellular region"/>
    <property type="evidence" value="ECO:0000250"/>
    <property type="project" value="UniProtKB"/>
</dbReference>
<dbReference type="GO" id="GO:0005615">
    <property type="term" value="C:extracellular space"/>
    <property type="evidence" value="ECO:0000314"/>
    <property type="project" value="AgBase"/>
</dbReference>
<dbReference type="GO" id="GO:0031994">
    <property type="term" value="F:insulin-like growth factor I binding"/>
    <property type="evidence" value="ECO:0000250"/>
    <property type="project" value="UniProtKB"/>
</dbReference>
<dbReference type="GO" id="GO:0031995">
    <property type="term" value="F:insulin-like growth factor II binding"/>
    <property type="evidence" value="ECO:0000250"/>
    <property type="project" value="UniProtKB"/>
</dbReference>
<dbReference type="GO" id="GO:0042104">
    <property type="term" value="P:positive regulation of activated T cell proliferation"/>
    <property type="evidence" value="ECO:0000250"/>
    <property type="project" value="UniProtKB"/>
</dbReference>
<dbReference type="GO" id="GO:0043567">
    <property type="term" value="P:regulation of insulin-like growth factor receptor signaling pathway"/>
    <property type="evidence" value="ECO:0000250"/>
    <property type="project" value="UniProtKB"/>
</dbReference>
<dbReference type="GO" id="GO:0032868">
    <property type="term" value="P:response to insulin"/>
    <property type="evidence" value="ECO:0000250"/>
    <property type="project" value="AgBase"/>
</dbReference>
<dbReference type="CDD" id="cd00191">
    <property type="entry name" value="TY"/>
    <property type="match status" value="1"/>
</dbReference>
<dbReference type="FunFam" id="4.10.40.20:FF:000007">
    <property type="entry name" value="Insulin-like growth factor-binding protein 2"/>
    <property type="match status" value="1"/>
</dbReference>
<dbReference type="FunFam" id="4.10.800.10:FF:000002">
    <property type="entry name" value="Insulin-like growth factor-binding protein 2"/>
    <property type="match status" value="1"/>
</dbReference>
<dbReference type="Gene3D" id="4.10.40.20">
    <property type="match status" value="1"/>
</dbReference>
<dbReference type="Gene3D" id="4.10.800.10">
    <property type="entry name" value="Thyroglobulin type-1"/>
    <property type="match status" value="1"/>
</dbReference>
<dbReference type="InterPro" id="IPR009030">
    <property type="entry name" value="Growth_fac_rcpt_cys_sf"/>
</dbReference>
<dbReference type="InterPro" id="IPR012210">
    <property type="entry name" value="IGFBP-2"/>
</dbReference>
<dbReference type="InterPro" id="IPR000867">
    <property type="entry name" value="IGFBP-like"/>
</dbReference>
<dbReference type="InterPro" id="IPR022321">
    <property type="entry name" value="IGFBP_1-6_chordata"/>
</dbReference>
<dbReference type="InterPro" id="IPR017891">
    <property type="entry name" value="Insulin_GF-bd_Cys-rich_CS"/>
</dbReference>
<dbReference type="InterPro" id="IPR000716">
    <property type="entry name" value="Thyroglobulin_1"/>
</dbReference>
<dbReference type="InterPro" id="IPR036857">
    <property type="entry name" value="Thyroglobulin_1_sf"/>
</dbReference>
<dbReference type="PANTHER" id="PTHR11551">
    <property type="entry name" value="INSULIN-LIKE GROWTH FACTOR BINDING PROTEIN"/>
    <property type="match status" value="1"/>
</dbReference>
<dbReference type="PANTHER" id="PTHR11551:SF5">
    <property type="entry name" value="INSULIN-LIKE GROWTH FACTOR-BINDING PROTEIN 2"/>
    <property type="match status" value="1"/>
</dbReference>
<dbReference type="Pfam" id="PF00219">
    <property type="entry name" value="IGFBP"/>
    <property type="match status" value="1"/>
</dbReference>
<dbReference type="Pfam" id="PF00086">
    <property type="entry name" value="Thyroglobulin_1"/>
    <property type="match status" value="1"/>
</dbReference>
<dbReference type="PRINTS" id="PR01976">
    <property type="entry name" value="IGFBPFAMILY"/>
</dbReference>
<dbReference type="PRINTS" id="PR01978">
    <property type="entry name" value="IGFBPFAMILY2"/>
</dbReference>
<dbReference type="SMART" id="SM00121">
    <property type="entry name" value="IB"/>
    <property type="match status" value="1"/>
</dbReference>
<dbReference type="SMART" id="SM00211">
    <property type="entry name" value="TY"/>
    <property type="match status" value="1"/>
</dbReference>
<dbReference type="SUPFAM" id="SSF57184">
    <property type="entry name" value="Growth factor receptor domain"/>
    <property type="match status" value="1"/>
</dbReference>
<dbReference type="SUPFAM" id="SSF57610">
    <property type="entry name" value="Thyroglobulin type-1 domain"/>
    <property type="match status" value="1"/>
</dbReference>
<dbReference type="PROSITE" id="PS00222">
    <property type="entry name" value="IGFBP_N_1"/>
    <property type="match status" value="1"/>
</dbReference>
<dbReference type="PROSITE" id="PS51323">
    <property type="entry name" value="IGFBP_N_2"/>
    <property type="match status" value="1"/>
</dbReference>
<dbReference type="PROSITE" id="PS00484">
    <property type="entry name" value="THYROGLOBULIN_1_1"/>
    <property type="match status" value="1"/>
</dbReference>
<dbReference type="PROSITE" id="PS51162">
    <property type="entry name" value="THYROGLOBULIN_1_2"/>
    <property type="match status" value="1"/>
</dbReference>
<reference key="1">
    <citation type="journal article" date="1992" name="J. Mol. Endocrinol.">
        <title>The characterization and expression of ovine insulin-like growth factor-binding protein-2.</title>
        <authorList>
            <person name="Delhanty P.J."/>
            <person name="Han V.K."/>
        </authorList>
    </citation>
    <scope>NUCLEOTIDE SEQUENCE [MRNA]</scope>
    <scope>TISSUE SPECIFICITY</scope>
    <source>
        <tissue>Liver</tissue>
    </source>
</reference>
<feature type="signal peptide" evidence="1">
    <location>
        <begin position="1"/>
        <end position="33"/>
    </location>
</feature>
<feature type="chain" id="PRO_0000014374" description="Insulin-like growth factor-binding protein 2">
    <location>
        <begin position="34"/>
        <end position="317"/>
    </location>
</feature>
<feature type="domain" description="IGFBP N-terminal" evidence="5">
    <location>
        <begin position="35"/>
        <end position="126"/>
    </location>
</feature>
<feature type="domain" description="Thyroglobulin type-1" evidence="4">
    <location>
        <begin position="216"/>
        <end position="298"/>
    </location>
</feature>
<feature type="region of interest" description="Disordered" evidence="6">
    <location>
        <begin position="125"/>
        <end position="151"/>
    </location>
</feature>
<feature type="region of interest" description="Disordered" evidence="6">
    <location>
        <begin position="189"/>
        <end position="218"/>
    </location>
</feature>
<feature type="short sequence motif" description="Cell attachment site" evidence="3">
    <location>
        <begin position="293"/>
        <end position="295"/>
    </location>
</feature>
<feature type="disulfide bond" evidence="5">
    <location>
        <begin position="39"/>
        <end position="76"/>
    </location>
</feature>
<feature type="disulfide bond" evidence="5">
    <location>
        <begin position="42"/>
        <end position="78"/>
    </location>
</feature>
<feature type="disulfide bond" evidence="5">
    <location>
        <begin position="50"/>
        <end position="79"/>
    </location>
</feature>
<feature type="disulfide bond" evidence="5">
    <location>
        <begin position="68"/>
        <end position="82"/>
    </location>
</feature>
<feature type="disulfide bond" evidence="5">
    <location>
        <begin position="90"/>
        <end position="103"/>
    </location>
</feature>
<feature type="disulfide bond" evidence="5">
    <location>
        <begin position="97"/>
        <end position="123"/>
    </location>
</feature>
<feature type="disulfide bond" evidence="4">
    <location>
        <begin position="219"/>
        <end position="253"/>
    </location>
</feature>
<feature type="disulfide bond" evidence="4">
    <location>
        <begin position="264"/>
        <end position="275"/>
    </location>
</feature>
<feature type="disulfide bond" evidence="4">
    <location>
        <begin position="277"/>
        <end position="298"/>
    </location>
</feature>
<accession>Q29400</accession>
<gene>
    <name type="primary">IGFBP2</name>
</gene>